<name>WFDC1_CHICK</name>
<dbReference type="EMBL" id="AJ438290">
    <property type="protein sequence ID" value="CAD27352.1"/>
    <property type="molecule type" value="mRNA"/>
</dbReference>
<dbReference type="RefSeq" id="NP_989885.1">
    <property type="nucleotide sequence ID" value="NM_204554.2"/>
</dbReference>
<dbReference type="SMR" id="Q8JG33"/>
<dbReference type="FunCoup" id="Q8JG33">
    <property type="interactions" value="3"/>
</dbReference>
<dbReference type="STRING" id="9031.ENSGALP00000008818"/>
<dbReference type="PaxDb" id="9031-ENSGALP00000008818"/>
<dbReference type="Ensembl" id="ENSGALT00010018057.1">
    <property type="protein sequence ID" value="ENSGALP00010009943.1"/>
    <property type="gene ID" value="ENSGALG00010007577.1"/>
</dbReference>
<dbReference type="GeneID" id="395238"/>
<dbReference type="KEGG" id="gga:395238"/>
<dbReference type="CTD" id="58189"/>
<dbReference type="VEuPathDB" id="HostDB:geneid_395238"/>
<dbReference type="eggNOG" id="ENOG502QWDC">
    <property type="taxonomic scope" value="Eukaryota"/>
</dbReference>
<dbReference type="GeneTree" id="ENSGT00390000014299"/>
<dbReference type="HOGENOM" id="CLU_108761_0_0_1"/>
<dbReference type="InParanoid" id="Q8JG33"/>
<dbReference type="OMA" id="RFYKEYP"/>
<dbReference type="OrthoDB" id="5989673at2759"/>
<dbReference type="PhylomeDB" id="Q8JG33"/>
<dbReference type="TreeFam" id="TF328768"/>
<dbReference type="PRO" id="PR:Q8JG33"/>
<dbReference type="Proteomes" id="UP000000539">
    <property type="component" value="Chromosome 11"/>
</dbReference>
<dbReference type="Bgee" id="ENSGALG00000005503">
    <property type="expression patterns" value="Expressed in lung and 9 other cell types or tissues"/>
</dbReference>
<dbReference type="GO" id="GO:0005615">
    <property type="term" value="C:extracellular space"/>
    <property type="evidence" value="ECO:0000318"/>
    <property type="project" value="GO_Central"/>
</dbReference>
<dbReference type="GO" id="GO:0004867">
    <property type="term" value="F:serine-type endopeptidase inhibitor activity"/>
    <property type="evidence" value="ECO:0007669"/>
    <property type="project" value="UniProtKB-KW"/>
</dbReference>
<dbReference type="GO" id="GO:0050728">
    <property type="term" value="P:negative regulation of inflammatory response"/>
    <property type="evidence" value="ECO:0007669"/>
    <property type="project" value="Ensembl"/>
</dbReference>
<dbReference type="GO" id="GO:0061045">
    <property type="term" value="P:negative regulation of wound healing"/>
    <property type="evidence" value="ECO:0007669"/>
    <property type="project" value="Ensembl"/>
</dbReference>
<dbReference type="GO" id="GO:0001558">
    <property type="term" value="P:regulation of cell growth"/>
    <property type="evidence" value="ECO:0000318"/>
    <property type="project" value="GO_Central"/>
</dbReference>
<dbReference type="FunFam" id="4.10.75.10:FF:000003">
    <property type="entry name" value="WAP four-disulfide core domain protein 1"/>
    <property type="match status" value="1"/>
</dbReference>
<dbReference type="Gene3D" id="4.10.75.10">
    <property type="entry name" value="Elafin-like"/>
    <property type="match status" value="1"/>
</dbReference>
<dbReference type="InterPro" id="IPR036645">
    <property type="entry name" value="Elafin-like_sf"/>
</dbReference>
<dbReference type="InterPro" id="IPR008197">
    <property type="entry name" value="WAP_dom"/>
</dbReference>
<dbReference type="InterPro" id="IPR042357">
    <property type="entry name" value="WFDC1"/>
</dbReference>
<dbReference type="PANTHER" id="PTHR14308">
    <property type="entry name" value="WAP FOUR-DISULFIDE CORE DOMAIN PROTEIN 1"/>
    <property type="match status" value="1"/>
</dbReference>
<dbReference type="PANTHER" id="PTHR14308:SF0">
    <property type="entry name" value="WAP FOUR-DISULFIDE CORE DOMAIN PROTEIN 1"/>
    <property type="match status" value="1"/>
</dbReference>
<dbReference type="Pfam" id="PF00095">
    <property type="entry name" value="WAP"/>
    <property type="match status" value="1"/>
</dbReference>
<dbReference type="SMART" id="SM00217">
    <property type="entry name" value="WAP"/>
    <property type="match status" value="1"/>
</dbReference>
<dbReference type="SUPFAM" id="SSF57256">
    <property type="entry name" value="Elafin-like"/>
    <property type="match status" value="1"/>
</dbReference>
<dbReference type="PROSITE" id="PS51390">
    <property type="entry name" value="WAP"/>
    <property type="match status" value="1"/>
</dbReference>
<organism>
    <name type="scientific">Gallus gallus</name>
    <name type="common">Chicken</name>
    <dbReference type="NCBI Taxonomy" id="9031"/>
    <lineage>
        <taxon>Eukaryota</taxon>
        <taxon>Metazoa</taxon>
        <taxon>Chordata</taxon>
        <taxon>Craniata</taxon>
        <taxon>Vertebrata</taxon>
        <taxon>Euteleostomi</taxon>
        <taxon>Archelosauria</taxon>
        <taxon>Archosauria</taxon>
        <taxon>Dinosauria</taxon>
        <taxon>Saurischia</taxon>
        <taxon>Theropoda</taxon>
        <taxon>Coelurosauria</taxon>
        <taxon>Aves</taxon>
        <taxon>Neognathae</taxon>
        <taxon>Galloanserae</taxon>
        <taxon>Galliformes</taxon>
        <taxon>Phasianidae</taxon>
        <taxon>Phasianinae</taxon>
        <taxon>Gallus</taxon>
    </lineage>
</organism>
<gene>
    <name type="primary">WFDC1</name>
    <name type="synonym">PS20</name>
</gene>
<keyword id="KW-1015">Disulfide bond</keyword>
<keyword id="KW-0646">Protease inhibitor</keyword>
<keyword id="KW-1185">Reference proteome</keyword>
<keyword id="KW-0964">Secreted</keyword>
<keyword id="KW-0722">Serine protease inhibitor</keyword>
<keyword id="KW-0732">Signal</keyword>
<proteinExistence type="evidence at transcript level"/>
<evidence type="ECO:0000250" key="1"/>
<evidence type="ECO:0000255" key="2"/>
<evidence type="ECO:0000255" key="3">
    <source>
        <dbReference type="PROSITE-ProRule" id="PRU00722"/>
    </source>
</evidence>
<evidence type="ECO:0000305" key="4"/>
<protein>
    <recommendedName>
        <fullName>WAP four-disulfide core domain protein 1</fullName>
    </recommendedName>
    <alternativeName>
        <fullName>Protein ps20</fullName>
    </alternativeName>
</protein>
<comment type="function">
    <text evidence="1">Has growth inhibitory activity.</text>
</comment>
<comment type="subcellular location">
    <subcellularLocation>
        <location evidence="4">Secreted</location>
    </subcellularLocation>
</comment>
<reference key="1">
    <citation type="submission" date="2002-03" db="EMBL/GenBank/DDBJ databases">
        <title>cps20 is differentially expressed in chicken limb buds.</title>
        <authorList>
            <person name="Lopez-Viado C."/>
            <person name="Galetto R."/>
            <person name="Piedra E."/>
            <person name="Ros M."/>
            <person name="Rodriguez-Rey J.C."/>
        </authorList>
    </citation>
    <scope>NUCLEOTIDE SEQUENCE [MRNA]</scope>
</reference>
<accession>Q8JG33</accession>
<sequence>MDSRMLSDQRFCRRIFAAALCVLVLLADSGCARNLWKRALHLKMTEKYDDYEYPLHSHSAHYQKNDRCPPPPQTLPDRACEVPSCRSDSECERHKRCCYNGCIYACLESVQPPPVLDWLVQPKPRWLGGNGWLLDGPEEVLQAEACSTTEDGDEPLHCPTGYECHIINPGNTAEGIPNRGQCIKLRGNPDGRNLRHKYYKEYFGSNSNNVVGYVKNQQKHLG</sequence>
<feature type="signal peptide" evidence="2">
    <location>
        <begin position="1"/>
        <end position="32"/>
    </location>
</feature>
<feature type="chain" id="PRO_0000041368" description="WAP four-disulfide core domain protein 1">
    <location>
        <begin position="33"/>
        <end position="222"/>
    </location>
</feature>
<feature type="domain" description="WAP" evidence="3">
    <location>
        <begin position="61"/>
        <end position="110"/>
    </location>
</feature>
<feature type="disulfide bond" evidence="3">
    <location>
        <begin position="68"/>
        <end position="98"/>
    </location>
</feature>
<feature type="disulfide bond" evidence="3">
    <location>
        <begin position="80"/>
        <end position="102"/>
    </location>
</feature>
<feature type="disulfide bond" evidence="3">
    <location>
        <begin position="85"/>
        <end position="97"/>
    </location>
</feature>
<feature type="disulfide bond" evidence="3">
    <location>
        <begin position="91"/>
        <end position="106"/>
    </location>
</feature>